<name>Y9957_DICDI</name>
<organism>
    <name type="scientific">Dictyostelium discoideum</name>
    <name type="common">Social amoeba</name>
    <dbReference type="NCBI Taxonomy" id="44689"/>
    <lineage>
        <taxon>Eukaryota</taxon>
        <taxon>Amoebozoa</taxon>
        <taxon>Evosea</taxon>
        <taxon>Eumycetozoa</taxon>
        <taxon>Dictyostelia</taxon>
        <taxon>Dictyosteliales</taxon>
        <taxon>Dictyosteliaceae</taxon>
        <taxon>Dictyostelium</taxon>
    </lineage>
</organism>
<gene>
    <name type="ORF">DDB_G0276181</name>
</gene>
<protein>
    <recommendedName>
        <fullName>Probable serine/threonine-protein kinase DDB_G0276181</fullName>
        <ecNumber>2.7.11.1</ecNumber>
    </recommendedName>
</protein>
<keyword id="KW-0067">ATP-binding</keyword>
<keyword id="KW-0418">Kinase</keyword>
<keyword id="KW-0547">Nucleotide-binding</keyword>
<keyword id="KW-1185">Reference proteome</keyword>
<keyword id="KW-0723">Serine/threonine-protein kinase</keyword>
<keyword id="KW-0808">Transferase</keyword>
<feature type="chain" id="PRO_0000355169" description="Probable serine/threonine-protein kinase DDB_G0276181">
    <location>
        <begin position="1"/>
        <end position="1555"/>
    </location>
</feature>
<feature type="domain" description="PH" evidence="1">
    <location>
        <begin position="58"/>
        <end position="238"/>
    </location>
</feature>
<feature type="domain" description="Protein kinase" evidence="2">
    <location>
        <begin position="986"/>
        <end position="1309"/>
    </location>
</feature>
<feature type="region of interest" description="Disordered" evidence="4">
    <location>
        <begin position="1"/>
        <end position="54"/>
    </location>
</feature>
<feature type="region of interest" description="Disordered" evidence="4">
    <location>
        <begin position="138"/>
        <end position="208"/>
    </location>
</feature>
<feature type="region of interest" description="Disordered" evidence="4">
    <location>
        <begin position="342"/>
        <end position="452"/>
    </location>
</feature>
<feature type="region of interest" description="Disordered" evidence="4">
    <location>
        <begin position="486"/>
        <end position="508"/>
    </location>
</feature>
<feature type="region of interest" description="Disordered" evidence="4">
    <location>
        <begin position="781"/>
        <end position="850"/>
    </location>
</feature>
<feature type="region of interest" description="Disordered" evidence="4">
    <location>
        <begin position="1012"/>
        <end position="1031"/>
    </location>
</feature>
<feature type="region of interest" description="Disordered" evidence="4">
    <location>
        <begin position="1340"/>
        <end position="1383"/>
    </location>
</feature>
<feature type="region of interest" description="Disordered" evidence="4">
    <location>
        <begin position="1457"/>
        <end position="1480"/>
    </location>
</feature>
<feature type="compositionally biased region" description="Low complexity" evidence="4">
    <location>
        <begin position="14"/>
        <end position="53"/>
    </location>
</feature>
<feature type="compositionally biased region" description="Low complexity" evidence="4">
    <location>
        <begin position="138"/>
        <end position="205"/>
    </location>
</feature>
<feature type="compositionally biased region" description="Low complexity" evidence="4">
    <location>
        <begin position="359"/>
        <end position="378"/>
    </location>
</feature>
<feature type="compositionally biased region" description="Low complexity" evidence="4">
    <location>
        <begin position="395"/>
        <end position="431"/>
    </location>
</feature>
<feature type="compositionally biased region" description="Polar residues" evidence="4">
    <location>
        <begin position="437"/>
        <end position="452"/>
    </location>
</feature>
<feature type="compositionally biased region" description="Low complexity" evidence="4">
    <location>
        <begin position="486"/>
        <end position="504"/>
    </location>
</feature>
<feature type="compositionally biased region" description="Low complexity" evidence="4">
    <location>
        <begin position="781"/>
        <end position="832"/>
    </location>
</feature>
<feature type="compositionally biased region" description="Polar residues" evidence="4">
    <location>
        <begin position="833"/>
        <end position="850"/>
    </location>
</feature>
<feature type="compositionally biased region" description="Low complexity" evidence="4">
    <location>
        <begin position="1340"/>
        <end position="1376"/>
    </location>
</feature>
<feature type="active site" description="Proton acceptor" evidence="2 3">
    <location>
        <position position="1156"/>
    </location>
</feature>
<feature type="binding site" evidence="2">
    <location>
        <begin position="992"/>
        <end position="1000"/>
    </location>
    <ligand>
        <name>ATP</name>
        <dbReference type="ChEBI" id="CHEBI:30616"/>
    </ligand>
</feature>
<feature type="binding site" evidence="2">
    <location>
        <position position="1061"/>
    </location>
    <ligand>
        <name>ATP</name>
        <dbReference type="ChEBI" id="CHEBI:30616"/>
    </ligand>
</feature>
<accession>Q552C1</accession>
<sequence>MTSVGTTLIVKPANNSGGSDGNIKNNNNNNNNNNNNNNNNNNSNSGNNSNNNSFIDDQVLHTGYLTKQGGRIQNWKIRWFVLKRGTLSYYLSPINWEYTKPRGVIYLTKKTELKEVDHRNRRHCFAVNPNYISENQSIIQQQQNQPILRSSSDSVNNNNNNNNNNNNNNNNNNNNNNNNNNNNNNNNNNNNNNNNNNNNNNNNNNSKLYPNSTRIYLISAQTVFDKSKWIEMIKLAISSDNSQDSKLKRANHQLEKVKDLVFSNRKGSIPTFPSLLNRTIATESLNDLIKVHLSKKRFYFYHDNLTLPALSYIDSESPVNLQEIHHQHLILLQQQKEELNKKLKKIQQQNNIGGGGSGSNIANSANKINNKNNDKINGVGSGEDKNNNKGGGGDNNSQSSSSSVSPTTVSPSVSPLSSSPTKPPIILSKKPLPTPPRNISTSDNGSGTDSPFYNSAITRLPLISTSVGMVGPNGMVNITSMNTTTTTTTTTTTTAPTTTNTNTNIKPLPGIQQNKLQLIQNKDGGGGGGGVLKRTNPLLSTSAPSMAYNQLVANSGIIHKHQPKIVVFHLVRDSFQISNIGGCSFNFEILSPFDPNFTLNFIPSSGTIQKGDSLTVLVELMAYNHIETDIYSTLHIIGGMEFTLFCRIETDPYLPLFLKSCAGSVLPLEKQMKMESFMKKNPTMVKSIQELAHTLILDGRNIIPLHLSNNININNNNNNGGGGSGYNIGGGSNNSIGGSGSNNNSNVNISNGWNIENSNRRNSGGCLNLVGGSGGGGLINNNINNNNNNNNNNNNNNNNNNNNNNNNNNNNNNNNNNNNNNNNNNNNNNNNNGSGLLSSSPLITISNQNTPTPQARVKLSKYILNFQRNQKKNSVGDVESVKIYQLLTDKFLISNSGSADASFQFHFPSRGKKNDLFSLSLVPTNGTVSKGEWFYIKSTLTVFVETEISEMIQLIINQREVHHILITVKCENIHPGNKEIDLEKEVVLHERLGTGATGDIYRGLISQDNLNRHISNQDSSGSNSSGSGSGHNWLIARNPSNDIINKDAIIGSGPQIIVAVKKLHPLADPSPEMIQDFYNEVRVLSMFNHPNVVKYVGGCTKIANWSIVMEYVPGGNLMDVLANPVLVIPYKLVLRMALDIAKGLHYLHSLGILHLDMKSPNLLVSSLSTSAKVNIKVADFNTCINRSRITAGFFNRHTGSGDNNKVEKDSKKGTTLWMAPEVIRGAMYSEKCDVYSFAIIMWEMVTRKLPYSHIAFNCEVEDQVLKGLRPPIPMHCNKNYTDLMEQCWDDDPENRPYFDTIIHSISKMIESNDITEQKAKASFKGLRRTQSNSTLNLLQVQNNNNNSNNNNNNNNNNNNNNSNSNLNNCNNSSPNLGTNSANNDSGVSVLQTCSDIGVGSTGTNSGTSGTNSGFDSPVIVTKDYHLISNLQKLDLHSNDGSDTNGSQIGFKSDINSKKSSLEVHSKHKSKRFSYDGGSSRASINTLNNDSNLPFKFSPPSTPQSSFLQLKKLDKELKSNLESNAGTKHSFIRYKPSFTNVTSAKSKLNLNNNNNN</sequence>
<comment type="catalytic activity">
    <reaction>
        <text>L-seryl-[protein] + ATP = O-phospho-L-seryl-[protein] + ADP + H(+)</text>
        <dbReference type="Rhea" id="RHEA:17989"/>
        <dbReference type="Rhea" id="RHEA-COMP:9863"/>
        <dbReference type="Rhea" id="RHEA-COMP:11604"/>
        <dbReference type="ChEBI" id="CHEBI:15378"/>
        <dbReference type="ChEBI" id="CHEBI:29999"/>
        <dbReference type="ChEBI" id="CHEBI:30616"/>
        <dbReference type="ChEBI" id="CHEBI:83421"/>
        <dbReference type="ChEBI" id="CHEBI:456216"/>
        <dbReference type="EC" id="2.7.11.1"/>
    </reaction>
</comment>
<comment type="catalytic activity">
    <reaction>
        <text>L-threonyl-[protein] + ATP = O-phospho-L-threonyl-[protein] + ADP + H(+)</text>
        <dbReference type="Rhea" id="RHEA:46608"/>
        <dbReference type="Rhea" id="RHEA-COMP:11060"/>
        <dbReference type="Rhea" id="RHEA-COMP:11605"/>
        <dbReference type="ChEBI" id="CHEBI:15378"/>
        <dbReference type="ChEBI" id="CHEBI:30013"/>
        <dbReference type="ChEBI" id="CHEBI:30616"/>
        <dbReference type="ChEBI" id="CHEBI:61977"/>
        <dbReference type="ChEBI" id="CHEBI:456216"/>
        <dbReference type="EC" id="2.7.11.1"/>
    </reaction>
</comment>
<comment type="similarity">
    <text evidence="5">Belongs to the protein kinase superfamily. TKL Ser/Thr protein kinase family.</text>
</comment>
<dbReference type="EC" id="2.7.11.1"/>
<dbReference type="EMBL" id="AAFI02000014">
    <property type="protein sequence ID" value="EAL69390.1"/>
    <property type="molecule type" value="Genomic_DNA"/>
</dbReference>
<dbReference type="RefSeq" id="XP_643307.1">
    <property type="nucleotide sequence ID" value="XM_638215.1"/>
</dbReference>
<dbReference type="SMR" id="Q552C1"/>
<dbReference type="FunCoup" id="Q552C1">
    <property type="interactions" value="466"/>
</dbReference>
<dbReference type="STRING" id="44689.Q552C1"/>
<dbReference type="GlyGen" id="Q552C1">
    <property type="glycosylation" value="1 site"/>
</dbReference>
<dbReference type="PaxDb" id="44689-DDB0229957"/>
<dbReference type="EnsemblProtists" id="EAL69390">
    <property type="protein sequence ID" value="EAL69390"/>
    <property type="gene ID" value="DDB_G0276181"/>
</dbReference>
<dbReference type="GeneID" id="8620353"/>
<dbReference type="KEGG" id="ddi:DDB_G0276181"/>
<dbReference type="dictyBase" id="DDB_G0276181"/>
<dbReference type="VEuPathDB" id="AmoebaDB:DDB_G0276181"/>
<dbReference type="eggNOG" id="KOG0192">
    <property type="taxonomic scope" value="Eukaryota"/>
</dbReference>
<dbReference type="HOGENOM" id="CLU_246199_0_0_1"/>
<dbReference type="InParanoid" id="Q552C1"/>
<dbReference type="OMA" id="FNTCINR"/>
<dbReference type="PRO" id="PR:Q552C1"/>
<dbReference type="Proteomes" id="UP000002195">
    <property type="component" value="Chromosome 2"/>
</dbReference>
<dbReference type="GO" id="GO:0005737">
    <property type="term" value="C:cytoplasm"/>
    <property type="evidence" value="ECO:0000318"/>
    <property type="project" value="GO_Central"/>
</dbReference>
<dbReference type="GO" id="GO:0005524">
    <property type="term" value="F:ATP binding"/>
    <property type="evidence" value="ECO:0007669"/>
    <property type="project" value="UniProtKB-KW"/>
</dbReference>
<dbReference type="GO" id="GO:0004672">
    <property type="term" value="F:protein kinase activity"/>
    <property type="evidence" value="ECO:0000318"/>
    <property type="project" value="GO_Central"/>
</dbReference>
<dbReference type="GO" id="GO:0106310">
    <property type="term" value="F:protein serine kinase activity"/>
    <property type="evidence" value="ECO:0007669"/>
    <property type="project" value="RHEA"/>
</dbReference>
<dbReference type="GO" id="GO:0004674">
    <property type="term" value="F:protein serine/threonine kinase activity"/>
    <property type="evidence" value="ECO:0007669"/>
    <property type="project" value="UniProtKB-KW"/>
</dbReference>
<dbReference type="GO" id="GO:0007165">
    <property type="term" value="P:signal transduction"/>
    <property type="evidence" value="ECO:0000318"/>
    <property type="project" value="GO_Central"/>
</dbReference>
<dbReference type="CDD" id="cd13999">
    <property type="entry name" value="STKc_MAP3K-like"/>
    <property type="match status" value="1"/>
</dbReference>
<dbReference type="Gene3D" id="2.30.29.30">
    <property type="entry name" value="Pleckstrin-homology domain (PH domain)/Phosphotyrosine-binding domain (PTB)"/>
    <property type="match status" value="1"/>
</dbReference>
<dbReference type="Gene3D" id="1.10.510.10">
    <property type="entry name" value="Transferase(Phosphotransferase) domain 1"/>
    <property type="match status" value="1"/>
</dbReference>
<dbReference type="InterPro" id="IPR011009">
    <property type="entry name" value="Kinase-like_dom_sf"/>
</dbReference>
<dbReference type="InterPro" id="IPR011993">
    <property type="entry name" value="PH-like_dom_sf"/>
</dbReference>
<dbReference type="InterPro" id="IPR001849">
    <property type="entry name" value="PH_domain"/>
</dbReference>
<dbReference type="InterPro" id="IPR000719">
    <property type="entry name" value="Prot_kinase_dom"/>
</dbReference>
<dbReference type="InterPro" id="IPR001245">
    <property type="entry name" value="Ser-Thr/Tyr_kinase_cat_dom"/>
</dbReference>
<dbReference type="InterPro" id="IPR008271">
    <property type="entry name" value="Ser/Thr_kinase_AS"/>
</dbReference>
<dbReference type="InterPro" id="IPR051681">
    <property type="entry name" value="Ser/Thr_Kinases-Pseudokinases"/>
</dbReference>
<dbReference type="PANTHER" id="PTHR44329:SF288">
    <property type="entry name" value="MITOGEN-ACTIVATED PROTEIN KINASE KINASE KINASE 20"/>
    <property type="match status" value="1"/>
</dbReference>
<dbReference type="PANTHER" id="PTHR44329">
    <property type="entry name" value="SERINE/THREONINE-PROTEIN KINASE TNNI3K-RELATED"/>
    <property type="match status" value="1"/>
</dbReference>
<dbReference type="Pfam" id="PF00169">
    <property type="entry name" value="PH"/>
    <property type="match status" value="1"/>
</dbReference>
<dbReference type="Pfam" id="PF07714">
    <property type="entry name" value="PK_Tyr_Ser-Thr"/>
    <property type="match status" value="1"/>
</dbReference>
<dbReference type="SMART" id="SM00233">
    <property type="entry name" value="PH"/>
    <property type="match status" value="1"/>
</dbReference>
<dbReference type="SMART" id="SM00220">
    <property type="entry name" value="S_TKc"/>
    <property type="match status" value="1"/>
</dbReference>
<dbReference type="SUPFAM" id="SSF50729">
    <property type="entry name" value="PH domain-like"/>
    <property type="match status" value="1"/>
</dbReference>
<dbReference type="SUPFAM" id="SSF56112">
    <property type="entry name" value="Protein kinase-like (PK-like)"/>
    <property type="match status" value="1"/>
</dbReference>
<dbReference type="PROSITE" id="PS50003">
    <property type="entry name" value="PH_DOMAIN"/>
    <property type="match status" value="1"/>
</dbReference>
<dbReference type="PROSITE" id="PS50011">
    <property type="entry name" value="PROTEIN_KINASE_DOM"/>
    <property type="match status" value="1"/>
</dbReference>
<dbReference type="PROSITE" id="PS00108">
    <property type="entry name" value="PROTEIN_KINASE_ST"/>
    <property type="match status" value="1"/>
</dbReference>
<reference key="1">
    <citation type="journal article" date="2002" name="Nature">
        <title>Sequence and analysis of chromosome 2 of Dictyostelium discoideum.</title>
        <authorList>
            <person name="Gloeckner G."/>
            <person name="Eichinger L."/>
            <person name="Szafranski K."/>
            <person name="Pachebat J.A."/>
            <person name="Bankier A.T."/>
            <person name="Dear P.H."/>
            <person name="Lehmann R."/>
            <person name="Baumgart C."/>
            <person name="Parra G."/>
            <person name="Abril J.F."/>
            <person name="Guigo R."/>
            <person name="Kumpf K."/>
            <person name="Tunggal B."/>
            <person name="Cox E.C."/>
            <person name="Quail M.A."/>
            <person name="Platzer M."/>
            <person name="Rosenthal A."/>
            <person name="Noegel A.A."/>
        </authorList>
    </citation>
    <scope>NUCLEOTIDE SEQUENCE [LARGE SCALE GENOMIC DNA]</scope>
    <source>
        <strain>AX4</strain>
    </source>
</reference>
<reference key="2">
    <citation type="journal article" date="2005" name="Nature">
        <title>The genome of the social amoeba Dictyostelium discoideum.</title>
        <authorList>
            <person name="Eichinger L."/>
            <person name="Pachebat J.A."/>
            <person name="Gloeckner G."/>
            <person name="Rajandream M.A."/>
            <person name="Sucgang R."/>
            <person name="Berriman M."/>
            <person name="Song J."/>
            <person name="Olsen R."/>
            <person name="Szafranski K."/>
            <person name="Xu Q."/>
            <person name="Tunggal B."/>
            <person name="Kummerfeld S."/>
            <person name="Madera M."/>
            <person name="Konfortov B.A."/>
            <person name="Rivero F."/>
            <person name="Bankier A.T."/>
            <person name="Lehmann R."/>
            <person name="Hamlin N."/>
            <person name="Davies R."/>
            <person name="Gaudet P."/>
            <person name="Fey P."/>
            <person name="Pilcher K."/>
            <person name="Chen G."/>
            <person name="Saunders D."/>
            <person name="Sodergren E.J."/>
            <person name="Davis P."/>
            <person name="Kerhornou A."/>
            <person name="Nie X."/>
            <person name="Hall N."/>
            <person name="Anjard C."/>
            <person name="Hemphill L."/>
            <person name="Bason N."/>
            <person name="Farbrother P."/>
            <person name="Desany B."/>
            <person name="Just E."/>
            <person name="Morio T."/>
            <person name="Rost R."/>
            <person name="Churcher C.M."/>
            <person name="Cooper J."/>
            <person name="Haydock S."/>
            <person name="van Driessche N."/>
            <person name="Cronin A."/>
            <person name="Goodhead I."/>
            <person name="Muzny D.M."/>
            <person name="Mourier T."/>
            <person name="Pain A."/>
            <person name="Lu M."/>
            <person name="Harper D."/>
            <person name="Lindsay R."/>
            <person name="Hauser H."/>
            <person name="James K.D."/>
            <person name="Quiles M."/>
            <person name="Madan Babu M."/>
            <person name="Saito T."/>
            <person name="Buchrieser C."/>
            <person name="Wardroper A."/>
            <person name="Felder M."/>
            <person name="Thangavelu M."/>
            <person name="Johnson D."/>
            <person name="Knights A."/>
            <person name="Loulseged H."/>
            <person name="Mungall K.L."/>
            <person name="Oliver K."/>
            <person name="Price C."/>
            <person name="Quail M.A."/>
            <person name="Urushihara H."/>
            <person name="Hernandez J."/>
            <person name="Rabbinowitsch E."/>
            <person name="Steffen D."/>
            <person name="Sanders M."/>
            <person name="Ma J."/>
            <person name="Kohara Y."/>
            <person name="Sharp S."/>
            <person name="Simmonds M.N."/>
            <person name="Spiegler S."/>
            <person name="Tivey A."/>
            <person name="Sugano S."/>
            <person name="White B."/>
            <person name="Walker D."/>
            <person name="Woodward J.R."/>
            <person name="Winckler T."/>
            <person name="Tanaka Y."/>
            <person name="Shaulsky G."/>
            <person name="Schleicher M."/>
            <person name="Weinstock G.M."/>
            <person name="Rosenthal A."/>
            <person name="Cox E.C."/>
            <person name="Chisholm R.L."/>
            <person name="Gibbs R.A."/>
            <person name="Loomis W.F."/>
            <person name="Platzer M."/>
            <person name="Kay R.R."/>
            <person name="Williams J.G."/>
            <person name="Dear P.H."/>
            <person name="Noegel A.A."/>
            <person name="Barrell B.G."/>
            <person name="Kuspa A."/>
        </authorList>
    </citation>
    <scope>NUCLEOTIDE SEQUENCE [LARGE SCALE GENOMIC DNA]</scope>
    <source>
        <strain>AX4</strain>
    </source>
</reference>
<evidence type="ECO:0000255" key="1">
    <source>
        <dbReference type="PROSITE-ProRule" id="PRU00145"/>
    </source>
</evidence>
<evidence type="ECO:0000255" key="2">
    <source>
        <dbReference type="PROSITE-ProRule" id="PRU00159"/>
    </source>
</evidence>
<evidence type="ECO:0000255" key="3">
    <source>
        <dbReference type="PROSITE-ProRule" id="PRU10027"/>
    </source>
</evidence>
<evidence type="ECO:0000256" key="4">
    <source>
        <dbReference type="SAM" id="MobiDB-lite"/>
    </source>
</evidence>
<evidence type="ECO:0000305" key="5"/>
<proteinExistence type="inferred from homology"/>